<accession>O34031</accession>
<protein>
    <recommendedName>
        <fullName evidence="2">Large ribosomal subunit protein bL19</fullName>
    </recommendedName>
    <alternativeName>
        <fullName>50S ribosomal protein L19</fullName>
    </alternativeName>
</protein>
<reference key="1">
    <citation type="journal article" date="1997" name="Microbiology">
        <title>Sequence analysis and characterization of phi O1205, a temperate bacteriophage infecting Streptococcus thermophilus CNRZ1205.</title>
        <authorList>
            <person name="Stanley E."/>
            <person name="Fitzgerald G.F."/>
            <person name="le Marrec C."/>
            <person name="Fayard B."/>
            <person name="van Sinderen D."/>
        </authorList>
    </citation>
    <scope>NUCLEOTIDE SEQUENCE [GENOMIC DNA]</scope>
    <source>
        <strain>CNRZ 1205</strain>
    </source>
</reference>
<reference key="2">
    <citation type="journal article" date="2000" name="Virology">
        <title>Broad-range bacteriophage resistance in Streptococcus thermophilus by insertional mutagenesis.</title>
        <authorList>
            <person name="Lucchini S."/>
            <person name="Sidoti J."/>
            <person name="Brussow H."/>
        </authorList>
    </citation>
    <scope>NUCLEOTIDE SEQUENCE [GENOMIC DNA]</scope>
</reference>
<dbReference type="EMBL" id="U88973">
    <property type="protein sequence ID" value="AAC01534.1"/>
    <property type="molecule type" value="Genomic_DNA"/>
</dbReference>
<dbReference type="EMBL" id="AF013585">
    <property type="protein sequence ID" value="AAK19835.1"/>
    <property type="molecule type" value="Genomic_DNA"/>
</dbReference>
<dbReference type="RefSeq" id="WP_002950935.1">
    <property type="nucleotide sequence ID" value="NZ_WMLD01000003.1"/>
</dbReference>
<dbReference type="SMR" id="O34031"/>
<dbReference type="GeneID" id="66898973"/>
<dbReference type="eggNOG" id="COG0335">
    <property type="taxonomic scope" value="Bacteria"/>
</dbReference>
<dbReference type="OMA" id="TITVYYE"/>
<dbReference type="OrthoDB" id="9803541at2"/>
<dbReference type="GO" id="GO:0022625">
    <property type="term" value="C:cytosolic large ribosomal subunit"/>
    <property type="evidence" value="ECO:0007669"/>
    <property type="project" value="TreeGrafter"/>
</dbReference>
<dbReference type="GO" id="GO:0003735">
    <property type="term" value="F:structural constituent of ribosome"/>
    <property type="evidence" value="ECO:0007669"/>
    <property type="project" value="InterPro"/>
</dbReference>
<dbReference type="GO" id="GO:0006412">
    <property type="term" value="P:translation"/>
    <property type="evidence" value="ECO:0007669"/>
    <property type="project" value="UniProtKB-UniRule"/>
</dbReference>
<dbReference type="FunFam" id="2.30.30.790:FF:000001">
    <property type="entry name" value="50S ribosomal protein L19"/>
    <property type="match status" value="1"/>
</dbReference>
<dbReference type="Gene3D" id="2.30.30.790">
    <property type="match status" value="1"/>
</dbReference>
<dbReference type="HAMAP" id="MF_00402">
    <property type="entry name" value="Ribosomal_bL19"/>
    <property type="match status" value="1"/>
</dbReference>
<dbReference type="InterPro" id="IPR001857">
    <property type="entry name" value="Ribosomal_bL19"/>
</dbReference>
<dbReference type="InterPro" id="IPR018257">
    <property type="entry name" value="Ribosomal_bL19_CS"/>
</dbReference>
<dbReference type="InterPro" id="IPR038657">
    <property type="entry name" value="Ribosomal_bL19_sf"/>
</dbReference>
<dbReference type="InterPro" id="IPR008991">
    <property type="entry name" value="Translation_prot_SH3-like_sf"/>
</dbReference>
<dbReference type="NCBIfam" id="TIGR01024">
    <property type="entry name" value="rplS_bact"/>
    <property type="match status" value="1"/>
</dbReference>
<dbReference type="PANTHER" id="PTHR15680:SF9">
    <property type="entry name" value="LARGE RIBOSOMAL SUBUNIT PROTEIN BL19M"/>
    <property type="match status" value="1"/>
</dbReference>
<dbReference type="PANTHER" id="PTHR15680">
    <property type="entry name" value="RIBOSOMAL PROTEIN L19"/>
    <property type="match status" value="1"/>
</dbReference>
<dbReference type="Pfam" id="PF01245">
    <property type="entry name" value="Ribosomal_L19"/>
    <property type="match status" value="1"/>
</dbReference>
<dbReference type="PIRSF" id="PIRSF002191">
    <property type="entry name" value="Ribosomal_L19"/>
    <property type="match status" value="1"/>
</dbReference>
<dbReference type="PRINTS" id="PR00061">
    <property type="entry name" value="RIBOSOMALL19"/>
</dbReference>
<dbReference type="SUPFAM" id="SSF50104">
    <property type="entry name" value="Translation proteins SH3-like domain"/>
    <property type="match status" value="1"/>
</dbReference>
<dbReference type="PROSITE" id="PS01015">
    <property type="entry name" value="RIBOSOMAL_L19"/>
    <property type="match status" value="1"/>
</dbReference>
<evidence type="ECO:0000250" key="1"/>
<evidence type="ECO:0000305" key="2"/>
<organism>
    <name type="scientific">Streptococcus thermophilus</name>
    <dbReference type="NCBI Taxonomy" id="1308"/>
    <lineage>
        <taxon>Bacteria</taxon>
        <taxon>Bacillati</taxon>
        <taxon>Bacillota</taxon>
        <taxon>Bacilli</taxon>
        <taxon>Lactobacillales</taxon>
        <taxon>Streptococcaceae</taxon>
        <taxon>Streptococcus</taxon>
    </lineage>
</organism>
<comment type="function">
    <text evidence="1">This protein is located at the 30S-50S ribosomal subunit interface and may play a role in the structure and function of the aminoacyl-tRNA binding site.</text>
</comment>
<comment type="similarity">
    <text evidence="2">Belongs to the bacterial ribosomal protein bL19 family.</text>
</comment>
<name>RL19_STRTR</name>
<sequence>MNPLIQSLTEGQLRTDIPSFRPGDTVRVHAKVVEGTRERIQIFEGVVISRKGQGISEMYTVRKISSGIGVERTFPIHTPRVDKIEVVRYGKVRRAKLYYLRALQGKAARIKEIRK</sequence>
<gene>
    <name type="primary">rplS</name>
</gene>
<feature type="chain" id="PRO_0000163548" description="Large ribosomal subunit protein bL19">
    <location>
        <begin position="1"/>
        <end position="115"/>
    </location>
</feature>
<keyword id="KW-0687">Ribonucleoprotein</keyword>
<keyword id="KW-0689">Ribosomal protein</keyword>
<proteinExistence type="inferred from homology"/>